<dbReference type="EMBL" id="AY261361">
    <property type="status" value="NOT_ANNOTATED_CDS"/>
    <property type="molecule type" value="Genomic_DNA"/>
</dbReference>
<dbReference type="Proteomes" id="UP000000860">
    <property type="component" value="Segment"/>
</dbReference>
<dbReference type="GO" id="GO:0042330">
    <property type="term" value="P:taxis"/>
    <property type="evidence" value="ECO:0007669"/>
    <property type="project" value="InterPro"/>
</dbReference>
<dbReference type="InterPro" id="IPR002595">
    <property type="entry name" value="ASFV_MGF360"/>
</dbReference>
<dbReference type="Pfam" id="PF01671">
    <property type="entry name" value="ASFV_360"/>
    <property type="match status" value="1"/>
</dbReference>
<gene>
    <name type="ordered locus">Mal-156</name>
</gene>
<evidence type="ECO:0000305" key="1"/>
<protein>
    <recommendedName>
        <fullName>Uncharacterized protein DP63R</fullName>
    </recommendedName>
</protein>
<reference key="1">
    <citation type="submission" date="2003-03" db="EMBL/GenBank/DDBJ databases">
        <title>African swine fever virus genomes.</title>
        <authorList>
            <person name="Kutish G.F."/>
            <person name="Rock D.L."/>
        </authorList>
    </citation>
    <scope>NUCLEOTIDE SEQUENCE [LARGE SCALE GENOMIC DNA]</scope>
</reference>
<comment type="similarity">
    <text evidence="1">Belongs to the asfivirus DP63R family.</text>
</comment>
<organism>
    <name type="scientific">African swine fever virus (isolate Tick/Malawi/Lil 20-1/1983)</name>
    <name type="common">ASFV</name>
    <dbReference type="NCBI Taxonomy" id="10500"/>
    <lineage>
        <taxon>Viruses</taxon>
        <taxon>Varidnaviria</taxon>
        <taxon>Bamfordvirae</taxon>
        <taxon>Nucleocytoviricota</taxon>
        <taxon>Pokkesviricetes</taxon>
        <taxon>Asfuvirales</taxon>
        <taxon>Asfarviridae</taxon>
        <taxon>Asfivirus</taxon>
        <taxon>African swine fever virus</taxon>
    </lineage>
</organism>
<name>VF63R_ASFM2</name>
<accession>P0CAI8</accession>
<proteinExistence type="inferred from homology"/>
<sequence>MWFCIDLGANVFKEARALAGKKNRRVLQYILGLNIFKRELIPPCKDPDPSQIQILLKNYILKNVSTVFTYYCQ</sequence>
<feature type="chain" id="PRO_0000373712" description="Uncharacterized protein DP63R">
    <location>
        <begin position="1"/>
        <end position="73"/>
    </location>
</feature>
<organismHost>
    <name type="scientific">Ornithodoros</name>
    <name type="common">relapsing fever ticks</name>
    <dbReference type="NCBI Taxonomy" id="6937"/>
</organismHost>
<organismHost>
    <name type="scientific">Phacochoerus aethiopicus</name>
    <name type="common">Warthog</name>
    <dbReference type="NCBI Taxonomy" id="85517"/>
</organismHost>
<organismHost>
    <name type="scientific">Phacochoerus africanus</name>
    <name type="common">Warthog</name>
    <dbReference type="NCBI Taxonomy" id="41426"/>
</organismHost>
<organismHost>
    <name type="scientific">Potamochoerus larvatus</name>
    <name type="common">Bushpig</name>
    <dbReference type="NCBI Taxonomy" id="273792"/>
</organismHost>
<organismHost>
    <name type="scientific">Sus scrofa</name>
    <name type="common">Pig</name>
    <dbReference type="NCBI Taxonomy" id="9823"/>
</organismHost>